<comment type="function">
    <text evidence="1">Synthesizes alpha-1,4-glucan chains using ADP-glucose.</text>
</comment>
<comment type="catalytic activity">
    <reaction evidence="1">
        <text>[(1-&gt;4)-alpha-D-glucosyl](n) + ADP-alpha-D-glucose = [(1-&gt;4)-alpha-D-glucosyl](n+1) + ADP + H(+)</text>
        <dbReference type="Rhea" id="RHEA:18189"/>
        <dbReference type="Rhea" id="RHEA-COMP:9584"/>
        <dbReference type="Rhea" id="RHEA-COMP:9587"/>
        <dbReference type="ChEBI" id="CHEBI:15378"/>
        <dbReference type="ChEBI" id="CHEBI:15444"/>
        <dbReference type="ChEBI" id="CHEBI:57498"/>
        <dbReference type="ChEBI" id="CHEBI:456216"/>
        <dbReference type="EC" id="2.4.1.21"/>
    </reaction>
</comment>
<comment type="pathway">
    <text evidence="1">Glycan biosynthesis; glycogen biosynthesis.</text>
</comment>
<comment type="similarity">
    <text evidence="1">Belongs to the glycosyltransferase 1 family. Bacterial/plant glycogen synthase subfamily.</text>
</comment>
<reference key="1">
    <citation type="journal article" date="2011" name="J. Bacteriol.">
        <title>Genome sequence of the verrucomicrobium Opitutus terrae PB90-1, an abundant inhabitant of rice paddy soil ecosystems.</title>
        <authorList>
            <person name="van Passel M.W."/>
            <person name="Kant R."/>
            <person name="Palva A."/>
            <person name="Copeland A."/>
            <person name="Lucas S."/>
            <person name="Lapidus A."/>
            <person name="Glavina del Rio T."/>
            <person name="Pitluck S."/>
            <person name="Goltsman E."/>
            <person name="Clum A."/>
            <person name="Sun H."/>
            <person name="Schmutz J."/>
            <person name="Larimer F.W."/>
            <person name="Land M.L."/>
            <person name="Hauser L."/>
            <person name="Kyrpides N."/>
            <person name="Mikhailova N."/>
            <person name="Richardson P.P."/>
            <person name="Janssen P.H."/>
            <person name="de Vos W.M."/>
            <person name="Smidt H."/>
        </authorList>
    </citation>
    <scope>NUCLEOTIDE SEQUENCE [LARGE SCALE GENOMIC DNA]</scope>
    <source>
        <strain>DSM 11246 / JCM 15787 / PB90-1</strain>
    </source>
</reference>
<proteinExistence type="inferred from homology"/>
<evidence type="ECO:0000255" key="1">
    <source>
        <dbReference type="HAMAP-Rule" id="MF_00484"/>
    </source>
</evidence>
<gene>
    <name evidence="1" type="primary">glgA</name>
    <name type="ordered locus">Oter_2664</name>
</gene>
<feature type="chain" id="PRO_1000126088" description="Glycogen synthase">
    <location>
        <begin position="1"/>
        <end position="480"/>
    </location>
</feature>
<feature type="binding site" evidence="1">
    <location>
        <position position="15"/>
    </location>
    <ligand>
        <name>ADP-alpha-D-glucose</name>
        <dbReference type="ChEBI" id="CHEBI:57498"/>
    </ligand>
</feature>
<protein>
    <recommendedName>
        <fullName evidence="1">Glycogen synthase</fullName>
        <ecNumber evidence="1">2.4.1.21</ecNumber>
    </recommendedName>
    <alternativeName>
        <fullName evidence="1">Starch [bacterial glycogen] synthase</fullName>
    </alternativeName>
</protein>
<name>GLGA_OPITP</name>
<organism>
    <name type="scientific">Opitutus terrae (strain DSM 11246 / JCM 15787 / PB90-1)</name>
    <dbReference type="NCBI Taxonomy" id="452637"/>
    <lineage>
        <taxon>Bacteria</taxon>
        <taxon>Pseudomonadati</taxon>
        <taxon>Verrucomicrobiota</taxon>
        <taxon>Opitutia</taxon>
        <taxon>Opitutales</taxon>
        <taxon>Opitutaceae</taxon>
        <taxon>Opitutus</taxon>
    </lineage>
</organism>
<sequence>MKIVHVASELFPYVKTGGLADAVASLAGMLADSGHEVAVFLPGYRAALEHRDAAAAERRYRLKVEMGQQYLSGDVRVFSPRPNLSIFLICREEFFDRRAPYGNGERDYEDNSDRFIFFCKGVVETLRLADMQADVVHAHDWQAALLPLLLREAERRQGGMLAMKTIFTIHNIAFQGIFPRAVFARTNLPDELNSVDGLEYYEQINFMKAGILFADRVTTVSPRYAEEIQTPEFGCGLDGVVQTRESDLVGLLNGVDTKVWNPATDPLLPARYSRADLAGKRVCRAELLKRFGFAPDFDGPVFGMVCRLAEQKGVDLVLANQGFFLSQSCRLIVLGAGELRYETAMKALAARAPNKIALSAKLDEAMSHLIEAGSDFFLMPSLFEPCGLNQMYSQIYGTLPIVSRVGGLVDTVIDADQQPEKGTGLMCEPTSASLLDVLARAMTLFDDKPRYGTVQQRAMAREFGWNVAAAGYERLYRDTL</sequence>
<accession>B1ZUX5</accession>
<dbReference type="EC" id="2.4.1.21" evidence="1"/>
<dbReference type="EMBL" id="CP001032">
    <property type="protein sequence ID" value="ACB75945.1"/>
    <property type="molecule type" value="Genomic_DNA"/>
</dbReference>
<dbReference type="RefSeq" id="WP_012375480.1">
    <property type="nucleotide sequence ID" value="NC_010571.1"/>
</dbReference>
<dbReference type="SMR" id="B1ZUX5"/>
<dbReference type="STRING" id="452637.Oter_2664"/>
<dbReference type="CAZy" id="GT5">
    <property type="family name" value="Glycosyltransferase Family 5"/>
</dbReference>
<dbReference type="KEGG" id="ote:Oter_2664"/>
<dbReference type="eggNOG" id="COG0297">
    <property type="taxonomic scope" value="Bacteria"/>
</dbReference>
<dbReference type="HOGENOM" id="CLU_009583_18_5_0"/>
<dbReference type="OrthoDB" id="9808590at2"/>
<dbReference type="UniPathway" id="UPA00164"/>
<dbReference type="Proteomes" id="UP000007013">
    <property type="component" value="Chromosome"/>
</dbReference>
<dbReference type="GO" id="GO:0009011">
    <property type="term" value="F:alpha-1,4-glucan glucosyltransferase (ADP-glucose donor) activity"/>
    <property type="evidence" value="ECO:0007669"/>
    <property type="project" value="UniProtKB-UniRule"/>
</dbReference>
<dbReference type="GO" id="GO:0004373">
    <property type="term" value="F:alpha-1,4-glucan glucosyltransferase (UDP-glucose donor) activity"/>
    <property type="evidence" value="ECO:0007669"/>
    <property type="project" value="InterPro"/>
</dbReference>
<dbReference type="GO" id="GO:0005978">
    <property type="term" value="P:glycogen biosynthetic process"/>
    <property type="evidence" value="ECO:0007669"/>
    <property type="project" value="UniProtKB-UniRule"/>
</dbReference>
<dbReference type="CDD" id="cd03791">
    <property type="entry name" value="GT5_Glycogen_synthase_DULL1-like"/>
    <property type="match status" value="1"/>
</dbReference>
<dbReference type="Gene3D" id="3.40.50.2000">
    <property type="entry name" value="Glycogen Phosphorylase B"/>
    <property type="match status" value="2"/>
</dbReference>
<dbReference type="HAMAP" id="MF_00484">
    <property type="entry name" value="Glycogen_synth"/>
    <property type="match status" value="1"/>
</dbReference>
<dbReference type="InterPro" id="IPR001296">
    <property type="entry name" value="Glyco_trans_1"/>
</dbReference>
<dbReference type="InterPro" id="IPR011835">
    <property type="entry name" value="GS/SS"/>
</dbReference>
<dbReference type="InterPro" id="IPR013534">
    <property type="entry name" value="Starch_synth_cat_dom"/>
</dbReference>
<dbReference type="NCBIfam" id="TIGR02095">
    <property type="entry name" value="glgA"/>
    <property type="match status" value="1"/>
</dbReference>
<dbReference type="NCBIfam" id="NF001899">
    <property type="entry name" value="PRK00654.1-2"/>
    <property type="match status" value="1"/>
</dbReference>
<dbReference type="PANTHER" id="PTHR45825:SF11">
    <property type="entry name" value="ALPHA AMYLASE DOMAIN-CONTAINING PROTEIN"/>
    <property type="match status" value="1"/>
</dbReference>
<dbReference type="PANTHER" id="PTHR45825">
    <property type="entry name" value="GRANULE-BOUND STARCH SYNTHASE 1, CHLOROPLASTIC/AMYLOPLASTIC"/>
    <property type="match status" value="1"/>
</dbReference>
<dbReference type="Pfam" id="PF08323">
    <property type="entry name" value="Glyco_transf_5"/>
    <property type="match status" value="1"/>
</dbReference>
<dbReference type="Pfam" id="PF00534">
    <property type="entry name" value="Glycos_transf_1"/>
    <property type="match status" value="1"/>
</dbReference>
<dbReference type="SUPFAM" id="SSF53756">
    <property type="entry name" value="UDP-Glycosyltransferase/glycogen phosphorylase"/>
    <property type="match status" value="1"/>
</dbReference>
<keyword id="KW-0320">Glycogen biosynthesis</keyword>
<keyword id="KW-0328">Glycosyltransferase</keyword>
<keyword id="KW-1185">Reference proteome</keyword>
<keyword id="KW-0808">Transferase</keyword>